<gene>
    <name evidence="1" type="primary">def</name>
    <name type="ordered locus">MGAS10750_Spy1763</name>
</gene>
<feature type="chain" id="PRO_0000301107" description="Peptide deformylase">
    <location>
        <begin position="1"/>
        <end position="204"/>
    </location>
</feature>
<feature type="active site" evidence="1">
    <location>
        <position position="175"/>
    </location>
</feature>
<feature type="binding site" evidence="1">
    <location>
        <position position="131"/>
    </location>
    <ligand>
        <name>Fe cation</name>
        <dbReference type="ChEBI" id="CHEBI:24875"/>
    </ligand>
</feature>
<feature type="binding site" evidence="1">
    <location>
        <position position="174"/>
    </location>
    <ligand>
        <name>Fe cation</name>
        <dbReference type="ChEBI" id="CHEBI:24875"/>
    </ligand>
</feature>
<feature type="binding site" evidence="1">
    <location>
        <position position="178"/>
    </location>
    <ligand>
        <name>Fe cation</name>
        <dbReference type="ChEBI" id="CHEBI:24875"/>
    </ligand>
</feature>
<evidence type="ECO:0000255" key="1">
    <source>
        <dbReference type="HAMAP-Rule" id="MF_00163"/>
    </source>
</evidence>
<name>DEF_STRPF</name>
<reference key="1">
    <citation type="journal article" date="2006" name="Proc. Natl. Acad. Sci. U.S.A.">
        <title>Molecular genetic anatomy of inter- and intraserotype variation in the human bacterial pathogen group A Streptococcus.</title>
        <authorList>
            <person name="Beres S.B."/>
            <person name="Richter E.W."/>
            <person name="Nagiec M.J."/>
            <person name="Sumby P."/>
            <person name="Porcella S.F."/>
            <person name="DeLeo F.R."/>
            <person name="Musser J.M."/>
        </authorList>
    </citation>
    <scope>NUCLEOTIDE SEQUENCE [LARGE SCALE GENOMIC DNA]</scope>
    <source>
        <strain>MGAS10750</strain>
    </source>
</reference>
<proteinExistence type="inferred from homology"/>
<dbReference type="EC" id="3.5.1.88" evidence="1"/>
<dbReference type="EMBL" id="CP000262">
    <property type="protein sequence ID" value="ABF38713.1"/>
    <property type="molecule type" value="Genomic_DNA"/>
</dbReference>
<dbReference type="SMR" id="Q1J4M3"/>
<dbReference type="KEGG" id="spi:MGAS10750_Spy1763"/>
<dbReference type="HOGENOM" id="CLU_061901_4_0_9"/>
<dbReference type="Proteomes" id="UP000002434">
    <property type="component" value="Chromosome"/>
</dbReference>
<dbReference type="GO" id="GO:0046872">
    <property type="term" value="F:metal ion binding"/>
    <property type="evidence" value="ECO:0007669"/>
    <property type="project" value="UniProtKB-KW"/>
</dbReference>
<dbReference type="GO" id="GO:0042586">
    <property type="term" value="F:peptide deformylase activity"/>
    <property type="evidence" value="ECO:0007669"/>
    <property type="project" value="UniProtKB-UniRule"/>
</dbReference>
<dbReference type="GO" id="GO:0043686">
    <property type="term" value="P:co-translational protein modification"/>
    <property type="evidence" value="ECO:0007669"/>
    <property type="project" value="TreeGrafter"/>
</dbReference>
<dbReference type="GO" id="GO:0006412">
    <property type="term" value="P:translation"/>
    <property type="evidence" value="ECO:0007669"/>
    <property type="project" value="UniProtKB-UniRule"/>
</dbReference>
<dbReference type="CDD" id="cd00487">
    <property type="entry name" value="Pep_deformylase"/>
    <property type="match status" value="1"/>
</dbReference>
<dbReference type="FunFam" id="3.90.45.10:FF:000002">
    <property type="entry name" value="Peptide deformylase"/>
    <property type="match status" value="1"/>
</dbReference>
<dbReference type="Gene3D" id="3.90.45.10">
    <property type="entry name" value="Peptide deformylase"/>
    <property type="match status" value="1"/>
</dbReference>
<dbReference type="HAMAP" id="MF_00163">
    <property type="entry name" value="Pep_deformylase"/>
    <property type="match status" value="1"/>
</dbReference>
<dbReference type="InterPro" id="IPR023635">
    <property type="entry name" value="Peptide_deformylase"/>
</dbReference>
<dbReference type="InterPro" id="IPR036821">
    <property type="entry name" value="Peptide_deformylase_sf"/>
</dbReference>
<dbReference type="NCBIfam" id="TIGR00079">
    <property type="entry name" value="pept_deformyl"/>
    <property type="match status" value="1"/>
</dbReference>
<dbReference type="PANTHER" id="PTHR10458">
    <property type="entry name" value="PEPTIDE DEFORMYLASE"/>
    <property type="match status" value="1"/>
</dbReference>
<dbReference type="PANTHER" id="PTHR10458:SF8">
    <property type="entry name" value="PEPTIDE DEFORMYLASE 2"/>
    <property type="match status" value="1"/>
</dbReference>
<dbReference type="Pfam" id="PF01327">
    <property type="entry name" value="Pep_deformylase"/>
    <property type="match status" value="1"/>
</dbReference>
<dbReference type="PIRSF" id="PIRSF004749">
    <property type="entry name" value="Pep_def"/>
    <property type="match status" value="1"/>
</dbReference>
<dbReference type="PRINTS" id="PR01576">
    <property type="entry name" value="PDEFORMYLASE"/>
</dbReference>
<dbReference type="SUPFAM" id="SSF56420">
    <property type="entry name" value="Peptide deformylase"/>
    <property type="match status" value="1"/>
</dbReference>
<comment type="function">
    <text evidence="1">Removes the formyl group from the N-terminal Met of newly synthesized proteins. Requires at least a dipeptide for an efficient rate of reaction. N-terminal L-methionine is a prerequisite for activity but the enzyme has broad specificity at other positions.</text>
</comment>
<comment type="catalytic activity">
    <reaction evidence="1">
        <text>N-terminal N-formyl-L-methionyl-[peptide] + H2O = N-terminal L-methionyl-[peptide] + formate</text>
        <dbReference type="Rhea" id="RHEA:24420"/>
        <dbReference type="Rhea" id="RHEA-COMP:10639"/>
        <dbReference type="Rhea" id="RHEA-COMP:10640"/>
        <dbReference type="ChEBI" id="CHEBI:15377"/>
        <dbReference type="ChEBI" id="CHEBI:15740"/>
        <dbReference type="ChEBI" id="CHEBI:49298"/>
        <dbReference type="ChEBI" id="CHEBI:64731"/>
        <dbReference type="EC" id="3.5.1.88"/>
    </reaction>
</comment>
<comment type="cofactor">
    <cofactor evidence="1">
        <name>Fe(2+)</name>
        <dbReference type="ChEBI" id="CHEBI:29033"/>
    </cofactor>
    <text evidence="1">Binds 1 Fe(2+) ion.</text>
</comment>
<comment type="similarity">
    <text evidence="1">Belongs to the polypeptide deformylase family.</text>
</comment>
<keyword id="KW-0378">Hydrolase</keyword>
<keyword id="KW-0408">Iron</keyword>
<keyword id="KW-0479">Metal-binding</keyword>
<keyword id="KW-0648">Protein biosynthesis</keyword>
<protein>
    <recommendedName>
        <fullName evidence="1">Peptide deformylase</fullName>
        <shortName evidence="1">PDF</shortName>
        <ecNumber evidence="1">3.5.1.88</ecNumber>
    </recommendedName>
    <alternativeName>
        <fullName evidence="1">Polypeptide deformylase</fullName>
    </alternativeName>
</protein>
<accession>Q1J4M3</accession>
<sequence length="204" mass="22862">MSAQDKLIKPSHLITMDDIIREGNPTLRAVAKEVSLPLCDEDILLGEKMMQFLKHSQDPVMAEKLGLRAGVGLAAPQIDVSKRIIAVLVPNLPDKEGNPPKEAYSWQEVLYNPKIVSHSVQDAALSDGEGCLSVDRVVEGYVVRHARVTVDYYDKEGQQHRIKLKGYNAIVVQHEIDHINGVLFYDRINAKNPFETKEELLILD</sequence>
<organism>
    <name type="scientific">Streptococcus pyogenes serotype M4 (strain MGAS10750)</name>
    <dbReference type="NCBI Taxonomy" id="370554"/>
    <lineage>
        <taxon>Bacteria</taxon>
        <taxon>Bacillati</taxon>
        <taxon>Bacillota</taxon>
        <taxon>Bacilli</taxon>
        <taxon>Lactobacillales</taxon>
        <taxon>Streptococcaceae</taxon>
        <taxon>Streptococcus</taxon>
    </lineage>
</organism>